<proteinExistence type="evidence at protein level"/>
<organism>
    <name type="scientific">Homo sapiens</name>
    <name type="common">Human</name>
    <dbReference type="NCBI Taxonomy" id="9606"/>
    <lineage>
        <taxon>Eukaryota</taxon>
        <taxon>Metazoa</taxon>
        <taxon>Chordata</taxon>
        <taxon>Craniata</taxon>
        <taxon>Vertebrata</taxon>
        <taxon>Euteleostomi</taxon>
        <taxon>Mammalia</taxon>
        <taxon>Eutheria</taxon>
        <taxon>Euarchontoglires</taxon>
        <taxon>Primates</taxon>
        <taxon>Haplorrhini</taxon>
        <taxon>Catarrhini</taxon>
        <taxon>Hominidae</taxon>
        <taxon>Homo</taxon>
    </lineage>
</organism>
<evidence type="ECO:0000255" key="1"/>
<evidence type="ECO:0000256" key="2">
    <source>
        <dbReference type="SAM" id="MobiDB-lite"/>
    </source>
</evidence>
<evidence type="ECO:0000269" key="3">
    <source>
    </source>
</evidence>
<evidence type="ECO:0000269" key="4">
    <source>
    </source>
</evidence>
<evidence type="ECO:0000269" key="5">
    <source>
    </source>
</evidence>
<evidence type="ECO:0000269" key="6">
    <source>
    </source>
</evidence>
<evidence type="ECO:0000269" key="7">
    <source>
    </source>
</evidence>
<evidence type="ECO:0000269" key="8">
    <source>
    </source>
</evidence>
<evidence type="ECO:0000269" key="9">
    <source>
    </source>
</evidence>
<evidence type="ECO:0000269" key="10">
    <source>
    </source>
</evidence>
<evidence type="ECO:0000269" key="11">
    <source>
    </source>
</evidence>
<evidence type="ECO:0000269" key="12">
    <source>
    </source>
</evidence>
<evidence type="ECO:0000269" key="13">
    <source>
    </source>
</evidence>
<evidence type="ECO:0000269" key="14">
    <source>
    </source>
</evidence>
<evidence type="ECO:0000269" key="15">
    <source>
    </source>
</evidence>
<evidence type="ECO:0000269" key="16">
    <source>
    </source>
</evidence>
<evidence type="ECO:0000269" key="17">
    <source>
    </source>
</evidence>
<evidence type="ECO:0000269" key="18">
    <source>
    </source>
</evidence>
<evidence type="ECO:0000269" key="19">
    <source>
    </source>
</evidence>
<evidence type="ECO:0000269" key="20">
    <source>
    </source>
</evidence>
<evidence type="ECO:0000269" key="21">
    <source ref="4"/>
</evidence>
<evidence type="ECO:0000303" key="22">
    <source>
    </source>
</evidence>
<evidence type="ECO:0000305" key="23"/>
<evidence type="ECO:0007744" key="24">
    <source>
    </source>
</evidence>
<evidence type="ECO:0007829" key="25">
    <source>
        <dbReference type="PDB" id="1G1S"/>
    </source>
</evidence>
<comment type="function">
    <text evidence="5 7">A SLe(x)-type proteoglycan, which through high affinity, calcium-dependent interactions with E-, P- and L-selectins, mediates rapid rolling of leukocytes over vascular surfaces during the initial steps in inflammation. Critical for the initial leukocyte capture.</text>
</comment>
<comment type="function">
    <text evidence="13">(Microbial infection) Acts as a receptor for enterovirus 71.</text>
</comment>
<comment type="subunit">
    <text evidence="3 4 5 6 7 8 12 14 17 18 19 20">Homodimer; disulfide-linked. Interaction with P-, E- and L-selectins, through their lectin/EGF domains, is required for promoting recruitment and rolling of leukocytes. These interactions require sialyl Lewis X glycan modification but there is a differing dependence for tyrosine sulfations. Sulfation on Tyr-51 of PSGL1 is most important for high affinity L-selectin/SELL binding while P-selectin/SELP requires sulfation on Tyr-48. E-selectin/SELE binds with much lower affinity and requires the sLe(x) epitope, but apparently not tyrosine sulfation. Dimerization appears not to be required for P-selectin/SELP binding. Interacts with SNX20. Interacts with MSN and SYK; mediates the activation of SYK by SELPLG. Interacts with HAVCR1 (PubMed:24703780).</text>
</comment>
<comment type="subunit">
    <text evidence="13">(Microbial infection) Interacts with enterovirus 71 capsid proteins.</text>
</comment>
<comment type="subunit">
    <text evidence="11 13">(Microbial infection) Interacts with Staphylococcus aureus proteins SSL5 and SSL11; these interactions prevent SELPLG-mediated neutrophil rolling.</text>
</comment>
<comment type="interaction">
    <interactant intactId="EBI-1030190">
        <id>Q14242</id>
    </interactant>
    <interactant intactId="EBI-1030170">
        <id>P16109</id>
        <label>SELP</label>
    </interactant>
    <organismsDiffer>false</organismsDiffer>
    <experiments>4</experiments>
</comment>
<comment type="interaction">
    <interactant intactId="EBI-1030190">
        <id>Q14242</id>
    </interactant>
    <interactant intactId="EBI-744896">
        <id>Q7Z614</id>
        <label>SNX20</label>
    </interactant>
    <organismsDiffer>false</organismsDiffer>
    <experiments>5</experiments>
</comment>
<comment type="subcellular location">
    <subcellularLocation>
        <location>Membrane</location>
        <topology>Single-pass type I membrane protein</topology>
    </subcellularLocation>
</comment>
<comment type="alternative products">
    <event type="alternative splicing"/>
    <isoform>
        <id>Q14242-1</id>
        <name>1</name>
        <sequence type="displayed"/>
    </isoform>
    <isoform>
        <id>Q14242-2</id>
        <name>2</name>
        <sequence type="described" ref="VSP_044827"/>
    </isoform>
</comment>
<comment type="tissue specificity">
    <text>Expressed on neutrophils, monocytes and most lymphocytes.</text>
</comment>
<comment type="PTM">
    <text evidence="4 8">Displays complex, core-2, sialylated and fucosylated O-linked oligosaccharides, at least some of which appear to contain poly-N-acetyllactosamine with varying degrees of substitution. Mainly disialylated or neutral forms of the core-2 tetrasaccharide, Galbeta1--&gt;4GlcNAcbeta1--&gt;6(Galbeta1--&gt;3)GalNAcOH. The GlcN:GalN ratio is approximately 2:1 and the Man:Fuc ratio 3:5. Contains about 14% fucose with alpha-1,3 linkage present in two forms: One species is a disialylated, monofucosylated glycan, and the other, a monosialylated, trifucosylated glycan with a polylactosamine backbone. The fucosylated forms carry the Lewis antigen and are important for interaction with selectins and for functioning in leukocyte rolling. The modification containing the sialyl Lewis X glycan is on Thr-57. No sulfated O-glycans. Some N-glycosylation.</text>
</comment>
<comment type="PTM">
    <text evidence="4">Sulfation, in conjunction with the SLe(x)-containing glycan, is necessary for P- and L-selectin binding. High affinity P-selectin binding has a preferred requirement for the isomer sulfated on both Tyr-48 and Tyr-51, whereas L-selectin binding requires predominantly sulfation on Tyr-51 with sulfation on Tyr-48 playing only a minor role. These sulfations play an important role in L- and P-selectin-mediated neutrophil recruitment, and leukocyte rolling.</text>
</comment>
<comment type="online information" name="Wikipedia">
    <link uri="https://en.wikipedia.org/wiki/P-selectin_glycoprotein_ligand-1"/>
    <text>P-selectin glycoprotein ligand 1 entry</text>
</comment>
<gene>
    <name type="primary">SELPLG</name>
</gene>
<accession>Q14242</accession>
<accession>A8K2Y0</accession>
<accession>B4DQC3</accession>
<accession>B7Z5C7</accession>
<accession>J3KMX6</accession>
<accession>Q12775</accession>
<accession>Q6GTW7</accession>
<accession>Q8N7J7</accession>
<feature type="signal peptide" evidence="1">
    <location>
        <begin position="1"/>
        <end position="17"/>
    </location>
</feature>
<feature type="propeptide" id="PRO_0000022302">
    <location>
        <begin position="18"/>
        <end position="41"/>
    </location>
</feature>
<feature type="chain" id="PRO_0000022303" description="P-selectin glycoprotein ligand 1">
    <location>
        <begin position="42"/>
        <end position="412"/>
    </location>
</feature>
<feature type="topological domain" description="Extracellular" evidence="1">
    <location>
        <begin position="18"/>
        <end position="320"/>
    </location>
</feature>
<feature type="transmembrane region" description="Helical" evidence="1">
    <location>
        <begin position="321"/>
        <end position="341"/>
    </location>
</feature>
<feature type="topological domain" description="Cytoplasmic" evidence="1">
    <location>
        <begin position="342"/>
        <end position="412"/>
    </location>
</feature>
<feature type="repeat" description="1">
    <location>
        <begin position="122"/>
        <end position="131"/>
    </location>
</feature>
<feature type="repeat" description="2">
    <location>
        <begin position="132"/>
        <end position="141"/>
    </location>
</feature>
<feature type="repeat" description="3">
    <location>
        <begin position="142"/>
        <end position="151"/>
    </location>
</feature>
<feature type="repeat" description="4">
    <location>
        <begin position="162"/>
        <end position="171"/>
    </location>
</feature>
<feature type="repeat" description="5">
    <location>
        <begin position="182"/>
        <end position="191"/>
    </location>
</feature>
<feature type="repeat" description="6">
    <location>
        <begin position="192"/>
        <end position="201"/>
    </location>
</feature>
<feature type="repeat" description="7">
    <location>
        <begin position="202"/>
        <end position="211"/>
    </location>
</feature>
<feature type="repeat" description="8">
    <location>
        <begin position="212"/>
        <end position="221"/>
    </location>
</feature>
<feature type="repeat" description="9">
    <location>
        <begin position="222"/>
        <end position="231"/>
    </location>
</feature>
<feature type="repeat" description="10">
    <location>
        <begin position="232"/>
        <end position="241"/>
    </location>
</feature>
<feature type="repeat" description="11">
    <location>
        <begin position="242"/>
        <end position="251"/>
    </location>
</feature>
<feature type="repeat" description="12">
    <location>
        <begin position="252"/>
        <end position="261"/>
    </location>
</feature>
<feature type="region of interest" description="Disordered" evidence="2">
    <location>
        <begin position="56"/>
        <end position="95"/>
    </location>
</feature>
<feature type="region of interest" description="12 X 10 AA tandem repeats">
    <location>
        <begin position="122"/>
        <end position="261"/>
    </location>
</feature>
<feature type="region of interest" description="Disordered" evidence="2">
    <location>
        <begin position="125"/>
        <end position="146"/>
    </location>
</feature>
<feature type="region of interest" description="Disordered" evidence="2">
    <location>
        <begin position="166"/>
        <end position="252"/>
    </location>
</feature>
<feature type="region of interest" description="Disordered" evidence="2">
    <location>
        <begin position="374"/>
        <end position="412"/>
    </location>
</feature>
<feature type="compositionally biased region" description="Low complexity" evidence="2">
    <location>
        <begin position="66"/>
        <end position="82"/>
    </location>
</feature>
<feature type="compositionally biased region" description="Basic and acidic residues" evidence="2">
    <location>
        <begin position="395"/>
        <end position="406"/>
    </location>
</feature>
<feature type="modified residue" description="Pyrrolidone carboxylic acid" evidence="4">
    <location>
        <position position="42"/>
    </location>
</feature>
<feature type="modified residue" description="Sulfotyrosine" evidence="4">
    <location>
        <position position="46"/>
    </location>
</feature>
<feature type="modified residue" description="Sulfotyrosine" evidence="4">
    <location>
        <position position="48"/>
    </location>
</feature>
<feature type="modified residue" description="Sulfotyrosine" evidence="4">
    <location>
        <position position="51"/>
    </location>
</feature>
<feature type="modified residue" description="Phosphothreonine" evidence="24">
    <location>
        <position position="406"/>
    </location>
</feature>
<feature type="modified residue" description="Phosphoserine" evidence="24">
    <location>
        <position position="409"/>
    </location>
</feature>
<feature type="glycosylation site" description="O-linked (GalNAc...) threonine" evidence="4">
    <location>
        <position position="57"/>
    </location>
</feature>
<feature type="glycosylation site" description="N-linked (GlcNAc...) asparagine" evidence="1">
    <location>
        <position position="65"/>
    </location>
</feature>
<feature type="glycosylation site" description="N-linked (GlcNAc...) asparagine" evidence="1">
    <location>
        <position position="111"/>
    </location>
</feature>
<feature type="glycosylation site" description="N-linked (GlcNAc...) asparagine" evidence="1">
    <location>
        <position position="302"/>
    </location>
</feature>
<feature type="disulfide bond" description="Interchain" evidence="3">
    <location>
        <position position="320"/>
    </location>
</feature>
<feature type="splice variant" id="VSP_044827" description="In isoform 2." evidence="22">
    <original>M</original>
    <variation>MAVGASGLEGDKMAGAM</variation>
    <location>
        <position position="1"/>
    </location>
</feature>
<feature type="sequence variant" id="VAR_019156" description="In dbSNP:rs2228315." evidence="9 21">
    <original>M</original>
    <variation>I</variation>
    <location>
        <position position="62"/>
    </location>
</feature>
<feature type="sequence variant" id="VAR_005611" description="In short form; not an alternative splicing; dbSNP:rs63748999." evidence="9 10 16">
    <location>
        <begin position="132"/>
        <end position="141"/>
    </location>
</feature>
<feature type="sequence variant" id="VAR_019157" description="In dbSNP:rs8179142." evidence="21">
    <original>P</original>
    <variation>S</variation>
    <location>
        <position position="246"/>
    </location>
</feature>
<feature type="sequence variant" id="VAR_076761" description="In dbSNP:rs756234416." evidence="15">
    <original>T</original>
    <variation>M</variation>
    <location>
        <position position="249"/>
    </location>
</feature>
<feature type="mutagenesis site" description="No effect on L-selectin binding nor neutrophil rolling." evidence="7">
    <original>T</original>
    <variation>A</variation>
    <location>
        <position position="44"/>
    </location>
</feature>
<feature type="mutagenesis site" description="No sulfation. Almost complete loss of P-selectin binding. No effect on E-selectin binding." evidence="19">
    <original>YEYLDYD</original>
    <variation>FEFLDFE</variation>
    <location>
        <begin position="46"/>
        <end position="52"/>
    </location>
</feature>
<feature type="mutagenesis site" description="No sulfation. Almost complete loss of P-selectin binding. No effect on E-selectin binding.">
    <original>YEYLDY</original>
    <variation>FEFLDF</variation>
    <location>
        <begin position="46"/>
        <end position="51"/>
    </location>
</feature>
<feature type="mutagenesis site" description="Binding L-selectin reduced by 20%, neutrophil recruitment reduced by 30%, and lymphocyte rolling reduced by 32%; when associated with F-48. Binding L-selectin reduced by 86%, neutrophil recruitment reduced by 75%, and lymphocyte rolling reduced by 69%; when associated with F-51. Binding L-selectin reduced by 89%, and neutrophil recruitment reduced by 90%; when associated with F-48 and F-51. Binding of L-selectin reduced by 91%; when associated with F-48; F-51 and A-57." evidence="20">
    <original>Y</original>
    <variation>F</variation>
    <location>
        <position position="46"/>
    </location>
</feature>
<feature type="mutagenesis site" description="Binding L-selectin reduced by 20%, neutrophil recruitment reduced by 30%, and lymphocyte rolling reduced by 32%; when associated with F-46. Binding L-lectin reduced by 31%, neutrophil recruitment reduced by 52%, and lymphocyte rolling reduced by 52%; when associated with F-51. Binding L-selectin reduced by 89%, and neutrophil recruitment reduced by 90%; when associated with F-46 and F-51. Binding of L-selectin reduced by 91%; when associated with F-46; F-51 and A-57." evidence="7 20">
    <original>Y</original>
    <variation>F</variation>
    <location>
        <position position="48"/>
    </location>
</feature>
<feature type="mutagenesis site" description="Binding L-selectin reduced by 86%, neutrophil recruitment reduced by 75% and, lymphocyte rolling reduced by 69%; when associated with F-46. Binding L-selectin reduced by 31%, neutrophil recruitment reduced by 52%, and lymphocyte rolling reduced by 52%; when associated with F-48; Binding L-selectin reduced by 89%, and neutrophil recruitment reduced by 90%; when associated with F-46 and F-48. Binding of L-selectin reduced by 91%; when associated with F-46; F-48 and A-57." evidence="7 20">
    <original>Y</original>
    <variation>F</variation>
    <location>
        <position position="51"/>
    </location>
</feature>
<feature type="mutagenesis site" description="No E- nor P-selectin binding, and very little neutrophil rolling. Binding of L-selectin reduced by 91%; when associated with F-46; F-48 and F-51." evidence="7 20">
    <original>T</original>
    <variation>A</variation>
    <location>
        <position position="57"/>
    </location>
</feature>
<feature type="mutagenesis site" description="No dimer formation. No effect on P-selectin binding." evidence="3">
    <original>C</original>
    <variation>A</variation>
    <variation>S</variation>
    <location>
        <position position="320"/>
    </location>
</feature>
<feature type="sequence conflict" description="In Ref. 3; BAC05283." evidence="23" ref="3">
    <location>
        <begin position="23"/>
        <end position="39"/>
    </location>
</feature>
<feature type="sequence conflict" description="In Ref. 3; BAC05283." evidence="23" ref="3">
    <original>D</original>
    <variation>E</variation>
    <location>
        <position position="50"/>
    </location>
</feature>
<feature type="sequence conflict" description="In Ref. 3; BAC05283." evidence="23" ref="3">
    <original>M</original>
    <variation>T</variation>
    <location>
        <position position="219"/>
    </location>
</feature>
<feature type="sequence conflict" description="In Ref. 3; BAH12863." evidence="23" ref="3">
    <original>Q</original>
    <variation>R</variation>
    <location>
        <position position="222"/>
    </location>
</feature>
<feature type="sequence conflict" description="In Ref. 3; BAC05283." evidence="23" ref="3">
    <original>P</original>
    <variation>A</variation>
    <location>
        <position position="396"/>
    </location>
</feature>
<feature type="turn" evidence="25">
    <location>
        <begin position="51"/>
        <end position="53"/>
    </location>
</feature>
<protein>
    <recommendedName>
        <fullName>P-selectin glycoprotein ligand 1</fullName>
        <shortName>PSGL-1</shortName>
    </recommendedName>
    <alternativeName>
        <fullName>Selectin P ligand</fullName>
    </alternativeName>
    <cdAntigenName>CD162</cdAntigenName>
</protein>
<keyword id="KW-0002">3D-structure</keyword>
<keyword id="KW-0025">Alternative splicing</keyword>
<keyword id="KW-0130">Cell adhesion</keyword>
<keyword id="KW-0165">Cleavage on pair of basic residues</keyword>
<keyword id="KW-0903">Direct protein sequencing</keyword>
<keyword id="KW-1015">Disulfide bond</keyword>
<keyword id="KW-0325">Glycoprotein</keyword>
<keyword id="KW-1183">Host cell receptor for virus entry</keyword>
<keyword id="KW-0945">Host-virus interaction</keyword>
<keyword id="KW-0472">Membrane</keyword>
<keyword id="KW-0597">Phosphoprotein</keyword>
<keyword id="KW-1267">Proteomics identification</keyword>
<keyword id="KW-0873">Pyrrolidone carboxylic acid</keyword>
<keyword id="KW-0675">Receptor</keyword>
<keyword id="KW-1185">Reference proteome</keyword>
<keyword id="KW-0677">Repeat</keyword>
<keyword id="KW-0730">Sialic acid</keyword>
<keyword id="KW-0732">Signal</keyword>
<keyword id="KW-0765">Sulfation</keyword>
<keyword id="KW-0812">Transmembrane</keyword>
<keyword id="KW-1133">Transmembrane helix</keyword>
<name>SELPL_HUMAN</name>
<dbReference type="EMBL" id="U25956">
    <property type="protein sequence ID" value="AAA74577.1"/>
    <property type="molecule type" value="Genomic_DNA"/>
</dbReference>
<dbReference type="EMBL" id="U02297">
    <property type="protein sequence ID" value="AAC50061.1"/>
    <property type="molecule type" value="mRNA"/>
</dbReference>
<dbReference type="EMBL" id="AK098315">
    <property type="protein sequence ID" value="BAC05283.1"/>
    <property type="molecule type" value="mRNA"/>
</dbReference>
<dbReference type="EMBL" id="AK290395">
    <property type="protein sequence ID" value="BAF83084.1"/>
    <property type="molecule type" value="mRNA"/>
</dbReference>
<dbReference type="EMBL" id="AK298738">
    <property type="protein sequence ID" value="BAG60885.1"/>
    <property type="molecule type" value="mRNA"/>
</dbReference>
<dbReference type="EMBL" id="AK298742">
    <property type="protein sequence ID" value="BAH12863.1"/>
    <property type="molecule type" value="mRNA"/>
</dbReference>
<dbReference type="EMBL" id="AY331789">
    <property type="protein sequence ID" value="AAP81163.1"/>
    <property type="molecule type" value="Genomic_DNA"/>
</dbReference>
<dbReference type="EMBL" id="AC007569">
    <property type="status" value="NOT_ANNOTATED_CDS"/>
    <property type="molecule type" value="Genomic_DNA"/>
</dbReference>
<dbReference type="EMBL" id="AC008119">
    <property type="status" value="NOT_ANNOTATED_CDS"/>
    <property type="molecule type" value="Genomic_DNA"/>
</dbReference>
<dbReference type="EMBL" id="BC029782">
    <property type="protein sequence ID" value="AAH29782.1"/>
    <property type="molecule type" value="mRNA"/>
</dbReference>
<dbReference type="CCDS" id="CCDS31895.2">
    <molecule id="Q14242-1"/>
</dbReference>
<dbReference type="CCDS" id="CCDS55881.1">
    <molecule id="Q14242-2"/>
</dbReference>
<dbReference type="PIR" id="A57468">
    <property type="entry name" value="A57468"/>
</dbReference>
<dbReference type="RefSeq" id="NP_001193538.1">
    <molecule id="Q14242-2"/>
    <property type="nucleotide sequence ID" value="NM_001206609.2"/>
</dbReference>
<dbReference type="RefSeq" id="NP_002997.2">
    <molecule id="Q14242-1"/>
    <property type="nucleotide sequence ID" value="NM_003006.4"/>
</dbReference>
<dbReference type="PDB" id="1G1S">
    <property type="method" value="X-ray"/>
    <property type="resolution" value="1.90 A"/>
    <property type="chains" value="C/D=42-60"/>
</dbReference>
<dbReference type="PDBsum" id="1G1S"/>
<dbReference type="SMR" id="Q14242"/>
<dbReference type="BioGRID" id="112304">
    <property type="interactions" value="9"/>
</dbReference>
<dbReference type="CORUM" id="Q14242"/>
<dbReference type="DIP" id="DIP-37668N"/>
<dbReference type="FunCoup" id="Q14242">
    <property type="interactions" value="257"/>
</dbReference>
<dbReference type="IntAct" id="Q14242">
    <property type="interactions" value="7"/>
</dbReference>
<dbReference type="STRING" id="9606.ENSP00000228463"/>
<dbReference type="BindingDB" id="Q14242"/>
<dbReference type="ChEMBL" id="CHEMBL4183"/>
<dbReference type="DrugBank" id="DB16698">
    <property type="generic name" value="Neihulizumab"/>
</dbReference>
<dbReference type="GlyConnect" id="520">
    <property type="glycosylation" value="6 O-Linked glycans"/>
</dbReference>
<dbReference type="GlyCosmos" id="Q14242">
    <property type="glycosylation" value="4 sites, 9 glycans"/>
</dbReference>
<dbReference type="GlyGen" id="Q14242">
    <property type="glycosylation" value="17 sites, 10 O-linked glycans (8 sites)"/>
</dbReference>
<dbReference type="iPTMnet" id="Q14242"/>
<dbReference type="PhosphoSitePlus" id="Q14242"/>
<dbReference type="BioMuta" id="SELPLG"/>
<dbReference type="DMDM" id="2498904"/>
<dbReference type="MassIVE" id="Q14242"/>
<dbReference type="PaxDb" id="9606-ENSP00000228463"/>
<dbReference type="PeptideAtlas" id="Q14242"/>
<dbReference type="ProteomicsDB" id="59939">
    <molecule id="Q14242-1"/>
</dbReference>
<dbReference type="ABCD" id="Q14242">
    <property type="antibodies" value="1 sequenced antibody"/>
</dbReference>
<dbReference type="Antibodypedia" id="3720">
    <property type="antibodies" value="1157 antibodies from 41 providers"/>
</dbReference>
<dbReference type="DNASU" id="6404"/>
<dbReference type="Ensembl" id="ENST00000228463.7">
    <molecule id="Q14242-2"/>
    <property type="protein sequence ID" value="ENSP00000228463.6"/>
    <property type="gene ID" value="ENSG00000110876.11"/>
</dbReference>
<dbReference type="Ensembl" id="ENST00000550948.2">
    <molecule id="Q14242-1"/>
    <property type="protein sequence ID" value="ENSP00000447752.1"/>
    <property type="gene ID" value="ENSG00000110876.11"/>
</dbReference>
<dbReference type="GeneID" id="6404"/>
<dbReference type="KEGG" id="hsa:6404"/>
<dbReference type="MANE-Select" id="ENST00000550948.2">
    <property type="protein sequence ID" value="ENSP00000447752.1"/>
    <property type="RefSeq nucleotide sequence ID" value="NM_003006.4"/>
    <property type="RefSeq protein sequence ID" value="NP_002997.2"/>
</dbReference>
<dbReference type="UCSC" id="uc001tni.4">
    <molecule id="Q14242-1"/>
    <property type="organism name" value="human"/>
</dbReference>
<dbReference type="AGR" id="HGNC:10722"/>
<dbReference type="CTD" id="6404"/>
<dbReference type="DisGeNET" id="6404"/>
<dbReference type="GeneCards" id="SELPLG"/>
<dbReference type="HGNC" id="HGNC:10722">
    <property type="gene designation" value="SELPLG"/>
</dbReference>
<dbReference type="HPA" id="ENSG00000110876">
    <property type="expression patterns" value="Tissue enhanced (lymphoid)"/>
</dbReference>
<dbReference type="MIM" id="600738">
    <property type="type" value="gene"/>
</dbReference>
<dbReference type="neXtProt" id="NX_Q14242"/>
<dbReference type="OpenTargets" id="ENSG00000110876"/>
<dbReference type="PharmGKB" id="PA35644"/>
<dbReference type="VEuPathDB" id="HostDB:ENSG00000110876"/>
<dbReference type="eggNOG" id="ENOG502S8ZU">
    <property type="taxonomic scope" value="Eukaryota"/>
</dbReference>
<dbReference type="GeneTree" id="ENSGT00440000039754"/>
<dbReference type="HOGENOM" id="CLU_061579_0_0_1"/>
<dbReference type="InParanoid" id="Q14242"/>
<dbReference type="OMA" id="NHMYPVR"/>
<dbReference type="OrthoDB" id="8927116at2759"/>
<dbReference type="PAN-GO" id="Q14242">
    <property type="GO annotations" value="3 GO annotations based on evolutionary models"/>
</dbReference>
<dbReference type="PhylomeDB" id="Q14242"/>
<dbReference type="TreeFam" id="TF337792"/>
<dbReference type="PathwayCommons" id="Q14242"/>
<dbReference type="Reactome" id="R-HSA-202733">
    <property type="pathway name" value="Cell surface interactions at the vascular wall"/>
</dbReference>
<dbReference type="SignaLink" id="Q14242"/>
<dbReference type="SIGNOR" id="Q14242"/>
<dbReference type="BioGRID-ORCS" id="6404">
    <property type="hits" value="18 hits in 1164 CRISPR screens"/>
</dbReference>
<dbReference type="ChiTaRS" id="SELPLG">
    <property type="organism name" value="human"/>
</dbReference>
<dbReference type="EvolutionaryTrace" id="Q14242"/>
<dbReference type="GeneWiki" id="P-selectin_glycoprotein_ligand-1"/>
<dbReference type="GenomeRNAi" id="6404"/>
<dbReference type="Pharos" id="Q14242">
    <property type="development level" value="Tbio"/>
</dbReference>
<dbReference type="PRO" id="PR:Q14242"/>
<dbReference type="Proteomes" id="UP000005640">
    <property type="component" value="Chromosome 12"/>
</dbReference>
<dbReference type="RNAct" id="Q14242">
    <property type="molecule type" value="protein"/>
</dbReference>
<dbReference type="Bgee" id="ENSG00000110876">
    <property type="expression patterns" value="Expressed in granulocyte and 181 other cell types or tissues"/>
</dbReference>
<dbReference type="ExpressionAtlas" id="Q14242">
    <property type="expression patterns" value="baseline and differential"/>
</dbReference>
<dbReference type="GO" id="GO:0016020">
    <property type="term" value="C:membrane"/>
    <property type="evidence" value="ECO:0000304"/>
    <property type="project" value="ProtInc"/>
</dbReference>
<dbReference type="GO" id="GO:0005886">
    <property type="term" value="C:plasma membrane"/>
    <property type="evidence" value="ECO:0000314"/>
    <property type="project" value="UniProtKB"/>
</dbReference>
<dbReference type="GO" id="GO:0044853">
    <property type="term" value="C:plasma membrane raft"/>
    <property type="evidence" value="ECO:0000314"/>
    <property type="project" value="CAFA"/>
</dbReference>
<dbReference type="GO" id="GO:0001931">
    <property type="term" value="C:uropod"/>
    <property type="evidence" value="ECO:0000314"/>
    <property type="project" value="UniProtKB"/>
</dbReference>
<dbReference type="GO" id="GO:0005102">
    <property type="term" value="F:signaling receptor binding"/>
    <property type="evidence" value="ECO:0000303"/>
    <property type="project" value="ProtInc"/>
</dbReference>
<dbReference type="GO" id="GO:0001618">
    <property type="term" value="F:virus receptor activity"/>
    <property type="evidence" value="ECO:0007669"/>
    <property type="project" value="UniProtKB-KW"/>
</dbReference>
<dbReference type="GO" id="GO:0007155">
    <property type="term" value="P:cell adhesion"/>
    <property type="evidence" value="ECO:0000304"/>
    <property type="project" value="ProtInc"/>
</dbReference>
<dbReference type="GO" id="GO:0071354">
    <property type="term" value="P:cellular response to interleukin-6"/>
    <property type="evidence" value="ECO:0000314"/>
    <property type="project" value="MGI"/>
</dbReference>
<dbReference type="GO" id="GO:0050902">
    <property type="term" value="P:leukocyte adhesive activation"/>
    <property type="evidence" value="ECO:0000250"/>
    <property type="project" value="UniProtKB"/>
</dbReference>
<dbReference type="GO" id="GO:0050900">
    <property type="term" value="P:leukocyte migration"/>
    <property type="evidence" value="ECO:0000314"/>
    <property type="project" value="CAFA"/>
</dbReference>
<dbReference type="GO" id="GO:0050901">
    <property type="term" value="P:leukocyte tethering or rolling"/>
    <property type="evidence" value="ECO:0000314"/>
    <property type="project" value="CAFA"/>
</dbReference>
<dbReference type="IDEAL" id="IID00352"/>
<dbReference type="InterPro" id="IPR026195">
    <property type="entry name" value="PSGL-1"/>
</dbReference>
<dbReference type="PANTHER" id="PTHR17384:SF7">
    <property type="entry name" value="P-SELECTIN GLYCOPROTEIN LIGAND 1"/>
    <property type="match status" value="1"/>
</dbReference>
<dbReference type="PANTHER" id="PTHR17384">
    <property type="entry name" value="P-SELECTIN GLYCOPROTEIN LIGAND-1"/>
    <property type="match status" value="1"/>
</dbReference>
<reference key="1">
    <citation type="journal article" date="1995" name="J. Biol. Chem.">
        <title>Genomic organization and chromosomal localization of the gene encoding human P-selectin glycoprotein ligand.</title>
        <authorList>
            <person name="Veldman G.M."/>
            <person name="Bean K.M."/>
            <person name="Cumming D.A."/>
            <person name="Eddy R.L."/>
            <person name="Sait S.N.J."/>
            <person name="Shows T.B."/>
        </authorList>
    </citation>
    <scope>NUCLEOTIDE SEQUENCE [GENOMIC DNA]</scope>
    <source>
        <tissue>Placenta</tissue>
    </source>
</reference>
<reference key="2">
    <citation type="journal article" date="1993" name="Cell">
        <title>Expression cloning of a functional glycoprotein ligand for P-selectin.</title>
        <authorList>
            <person name="Sako D."/>
            <person name="Chang X.J."/>
            <person name="Barone K.M."/>
            <person name="Vachino G."/>
            <person name="White H.M."/>
            <person name="Shaw G."/>
            <person name="Veldman G.M."/>
            <person name="Bean K.M."/>
            <person name="Ahern T.J."/>
            <person name="Furie B."/>
            <person name="Cumming D.A."/>
            <person name="Larsen G.R."/>
        </authorList>
    </citation>
    <scope>NUCLEOTIDE SEQUENCE [MRNA] (ISOFORM 1)</scope>
    <scope>VARIANT 132-GLN--ALA-141 DEL</scope>
</reference>
<reference key="3">
    <citation type="journal article" date="2004" name="Nat. Genet.">
        <title>Complete sequencing and characterization of 21,243 full-length human cDNAs.</title>
        <authorList>
            <person name="Ota T."/>
            <person name="Suzuki Y."/>
            <person name="Nishikawa T."/>
            <person name="Otsuki T."/>
            <person name="Sugiyama T."/>
            <person name="Irie R."/>
            <person name="Wakamatsu A."/>
            <person name="Hayashi K."/>
            <person name="Sato H."/>
            <person name="Nagai K."/>
            <person name="Kimura K."/>
            <person name="Makita H."/>
            <person name="Sekine M."/>
            <person name="Obayashi M."/>
            <person name="Nishi T."/>
            <person name="Shibahara T."/>
            <person name="Tanaka T."/>
            <person name="Ishii S."/>
            <person name="Yamamoto J."/>
            <person name="Saito K."/>
            <person name="Kawai Y."/>
            <person name="Isono Y."/>
            <person name="Nakamura Y."/>
            <person name="Nagahari K."/>
            <person name="Murakami K."/>
            <person name="Yasuda T."/>
            <person name="Iwayanagi T."/>
            <person name="Wagatsuma M."/>
            <person name="Shiratori A."/>
            <person name="Sudo H."/>
            <person name="Hosoiri T."/>
            <person name="Kaku Y."/>
            <person name="Kodaira H."/>
            <person name="Kondo H."/>
            <person name="Sugawara M."/>
            <person name="Takahashi M."/>
            <person name="Kanda K."/>
            <person name="Yokoi T."/>
            <person name="Furuya T."/>
            <person name="Kikkawa E."/>
            <person name="Omura Y."/>
            <person name="Abe K."/>
            <person name="Kamihara K."/>
            <person name="Katsuta N."/>
            <person name="Sato K."/>
            <person name="Tanikawa M."/>
            <person name="Yamazaki M."/>
            <person name="Ninomiya K."/>
            <person name="Ishibashi T."/>
            <person name="Yamashita H."/>
            <person name="Murakawa K."/>
            <person name="Fujimori K."/>
            <person name="Tanai H."/>
            <person name="Kimata M."/>
            <person name="Watanabe M."/>
            <person name="Hiraoka S."/>
            <person name="Chiba Y."/>
            <person name="Ishida S."/>
            <person name="Ono Y."/>
            <person name="Takiguchi S."/>
            <person name="Watanabe S."/>
            <person name="Yosida M."/>
            <person name="Hotuta T."/>
            <person name="Kusano J."/>
            <person name="Kanehori K."/>
            <person name="Takahashi-Fujii A."/>
            <person name="Hara H."/>
            <person name="Tanase T.-O."/>
            <person name="Nomura Y."/>
            <person name="Togiya S."/>
            <person name="Komai F."/>
            <person name="Hara R."/>
            <person name="Takeuchi K."/>
            <person name="Arita M."/>
            <person name="Imose N."/>
            <person name="Musashino K."/>
            <person name="Yuuki H."/>
            <person name="Oshima A."/>
            <person name="Sasaki N."/>
            <person name="Aotsuka S."/>
            <person name="Yoshikawa Y."/>
            <person name="Matsunawa H."/>
            <person name="Ichihara T."/>
            <person name="Shiohata N."/>
            <person name="Sano S."/>
            <person name="Moriya S."/>
            <person name="Momiyama H."/>
            <person name="Satoh N."/>
            <person name="Takami S."/>
            <person name="Terashima Y."/>
            <person name="Suzuki O."/>
            <person name="Nakagawa S."/>
            <person name="Senoh A."/>
            <person name="Mizoguchi H."/>
            <person name="Goto Y."/>
            <person name="Shimizu F."/>
            <person name="Wakebe H."/>
            <person name="Hishigaki H."/>
            <person name="Watanabe T."/>
            <person name="Sugiyama A."/>
            <person name="Takemoto M."/>
            <person name="Kawakami B."/>
            <person name="Yamazaki M."/>
            <person name="Watanabe K."/>
            <person name="Kumagai A."/>
            <person name="Itakura S."/>
            <person name="Fukuzumi Y."/>
            <person name="Fujimori Y."/>
            <person name="Komiyama M."/>
            <person name="Tashiro H."/>
            <person name="Tanigami A."/>
            <person name="Fujiwara T."/>
            <person name="Ono T."/>
            <person name="Yamada K."/>
            <person name="Fujii Y."/>
            <person name="Ozaki K."/>
            <person name="Hirao M."/>
            <person name="Ohmori Y."/>
            <person name="Kawabata A."/>
            <person name="Hikiji T."/>
            <person name="Kobatake N."/>
            <person name="Inagaki H."/>
            <person name="Ikema Y."/>
            <person name="Okamoto S."/>
            <person name="Okitani R."/>
            <person name="Kawakami T."/>
            <person name="Noguchi S."/>
            <person name="Itoh T."/>
            <person name="Shigeta K."/>
            <person name="Senba T."/>
            <person name="Matsumura K."/>
            <person name="Nakajima Y."/>
            <person name="Mizuno T."/>
            <person name="Morinaga M."/>
            <person name="Sasaki M."/>
            <person name="Togashi T."/>
            <person name="Oyama M."/>
            <person name="Hata H."/>
            <person name="Watanabe M."/>
            <person name="Komatsu T."/>
            <person name="Mizushima-Sugano J."/>
            <person name="Satoh T."/>
            <person name="Shirai Y."/>
            <person name="Takahashi Y."/>
            <person name="Nakagawa K."/>
            <person name="Okumura K."/>
            <person name="Nagase T."/>
            <person name="Nomura N."/>
            <person name="Kikuchi H."/>
            <person name="Masuho Y."/>
            <person name="Yamashita R."/>
            <person name="Nakai K."/>
            <person name="Yada T."/>
            <person name="Nakamura Y."/>
            <person name="Ohara O."/>
            <person name="Isogai T."/>
            <person name="Sugano S."/>
        </authorList>
    </citation>
    <scope>NUCLEOTIDE SEQUENCE [LARGE SCALE MRNA] (ISOFORMS 1 AND 2)</scope>
    <scope>VARIANTS ILE-62 AND 132-GLN--ALA-141 DEL</scope>
    <source>
        <tissue>Uterus</tissue>
    </source>
</reference>
<reference key="4">
    <citation type="submission" date="2003-06" db="EMBL/GenBank/DDBJ databases">
        <authorList>
            <consortium name="SeattleSNPs variation discovery resource"/>
        </authorList>
    </citation>
    <scope>NUCLEOTIDE SEQUENCE [GENOMIC DNA]</scope>
    <scope>VARIANTS ILE-62 AND SER-246</scope>
</reference>
<reference key="5">
    <citation type="journal article" date="2006" name="Nature">
        <title>The finished DNA sequence of human chromosome 12.</title>
        <authorList>
            <person name="Scherer S.E."/>
            <person name="Muzny D.M."/>
            <person name="Buhay C.J."/>
            <person name="Chen R."/>
            <person name="Cree A."/>
            <person name="Ding Y."/>
            <person name="Dugan-Rocha S."/>
            <person name="Gill R."/>
            <person name="Gunaratne P."/>
            <person name="Harris R.A."/>
            <person name="Hawes A.C."/>
            <person name="Hernandez J."/>
            <person name="Hodgson A.V."/>
            <person name="Hume J."/>
            <person name="Jackson A."/>
            <person name="Khan Z.M."/>
            <person name="Kovar-Smith C."/>
            <person name="Lewis L.R."/>
            <person name="Lozado R.J."/>
            <person name="Metzker M.L."/>
            <person name="Milosavljevic A."/>
            <person name="Miner G.R."/>
            <person name="Montgomery K.T."/>
            <person name="Morgan M.B."/>
            <person name="Nazareth L.V."/>
            <person name="Scott G."/>
            <person name="Sodergren E."/>
            <person name="Song X.-Z."/>
            <person name="Steffen D."/>
            <person name="Lovering R.C."/>
            <person name="Wheeler D.A."/>
            <person name="Worley K.C."/>
            <person name="Yuan Y."/>
            <person name="Zhang Z."/>
            <person name="Adams C.Q."/>
            <person name="Ansari-Lari M.A."/>
            <person name="Ayele M."/>
            <person name="Brown M.J."/>
            <person name="Chen G."/>
            <person name="Chen Z."/>
            <person name="Clerc-Blankenburg K.P."/>
            <person name="Davis C."/>
            <person name="Delgado O."/>
            <person name="Dinh H.H."/>
            <person name="Draper H."/>
            <person name="Gonzalez-Garay M.L."/>
            <person name="Havlak P."/>
            <person name="Jackson L.R."/>
            <person name="Jacob L.S."/>
            <person name="Kelly S.H."/>
            <person name="Li L."/>
            <person name="Li Z."/>
            <person name="Liu J."/>
            <person name="Liu W."/>
            <person name="Lu J."/>
            <person name="Maheshwari M."/>
            <person name="Nguyen B.-V."/>
            <person name="Okwuonu G.O."/>
            <person name="Pasternak S."/>
            <person name="Perez L.M."/>
            <person name="Plopper F.J.H."/>
            <person name="Santibanez J."/>
            <person name="Shen H."/>
            <person name="Tabor P.E."/>
            <person name="Verduzco D."/>
            <person name="Waldron L."/>
            <person name="Wang Q."/>
            <person name="Williams G.A."/>
            <person name="Zhang J."/>
            <person name="Zhou J."/>
            <person name="Allen C.C."/>
            <person name="Amin A.G."/>
            <person name="Anyalebechi V."/>
            <person name="Bailey M."/>
            <person name="Barbaria J.A."/>
            <person name="Bimage K.E."/>
            <person name="Bryant N.P."/>
            <person name="Burch P.E."/>
            <person name="Burkett C.E."/>
            <person name="Burrell K.L."/>
            <person name="Calderon E."/>
            <person name="Cardenas V."/>
            <person name="Carter K."/>
            <person name="Casias K."/>
            <person name="Cavazos I."/>
            <person name="Cavazos S.R."/>
            <person name="Ceasar H."/>
            <person name="Chacko J."/>
            <person name="Chan S.N."/>
            <person name="Chavez D."/>
            <person name="Christopoulos C."/>
            <person name="Chu J."/>
            <person name="Cockrell R."/>
            <person name="Cox C.D."/>
            <person name="Dang M."/>
            <person name="Dathorne S.R."/>
            <person name="David R."/>
            <person name="Davis C.M."/>
            <person name="Davy-Carroll L."/>
            <person name="Deshazo D.R."/>
            <person name="Donlin J.E."/>
            <person name="D'Souza L."/>
            <person name="Eaves K.A."/>
            <person name="Egan A."/>
            <person name="Emery-Cohen A.J."/>
            <person name="Escotto M."/>
            <person name="Flagg N."/>
            <person name="Forbes L.D."/>
            <person name="Gabisi A.M."/>
            <person name="Garza M."/>
            <person name="Hamilton C."/>
            <person name="Henderson N."/>
            <person name="Hernandez O."/>
            <person name="Hines S."/>
            <person name="Hogues M.E."/>
            <person name="Huang M."/>
            <person name="Idlebird D.G."/>
            <person name="Johnson R."/>
            <person name="Jolivet A."/>
            <person name="Jones S."/>
            <person name="Kagan R."/>
            <person name="King L.M."/>
            <person name="Leal B."/>
            <person name="Lebow H."/>
            <person name="Lee S."/>
            <person name="LeVan J.M."/>
            <person name="Lewis L.C."/>
            <person name="London P."/>
            <person name="Lorensuhewa L.M."/>
            <person name="Loulseged H."/>
            <person name="Lovett D.A."/>
            <person name="Lucier A."/>
            <person name="Lucier R.L."/>
            <person name="Ma J."/>
            <person name="Madu R.C."/>
            <person name="Mapua P."/>
            <person name="Martindale A.D."/>
            <person name="Martinez E."/>
            <person name="Massey E."/>
            <person name="Mawhiney S."/>
            <person name="Meador M.G."/>
            <person name="Mendez S."/>
            <person name="Mercado C."/>
            <person name="Mercado I.C."/>
            <person name="Merritt C.E."/>
            <person name="Miner Z.L."/>
            <person name="Minja E."/>
            <person name="Mitchell T."/>
            <person name="Mohabbat F."/>
            <person name="Mohabbat K."/>
            <person name="Montgomery B."/>
            <person name="Moore N."/>
            <person name="Morris S."/>
            <person name="Munidasa M."/>
            <person name="Ngo R.N."/>
            <person name="Nguyen N.B."/>
            <person name="Nickerson E."/>
            <person name="Nwaokelemeh O.O."/>
            <person name="Nwokenkwo S."/>
            <person name="Obregon M."/>
            <person name="Oguh M."/>
            <person name="Oragunye N."/>
            <person name="Oviedo R.J."/>
            <person name="Parish B.J."/>
            <person name="Parker D.N."/>
            <person name="Parrish J."/>
            <person name="Parks K.L."/>
            <person name="Paul H.A."/>
            <person name="Payton B.A."/>
            <person name="Perez A."/>
            <person name="Perrin W."/>
            <person name="Pickens A."/>
            <person name="Primus E.L."/>
            <person name="Pu L.-L."/>
            <person name="Puazo M."/>
            <person name="Quiles M.M."/>
            <person name="Quiroz J.B."/>
            <person name="Rabata D."/>
            <person name="Reeves K."/>
            <person name="Ruiz S.J."/>
            <person name="Shao H."/>
            <person name="Sisson I."/>
            <person name="Sonaike T."/>
            <person name="Sorelle R.P."/>
            <person name="Sutton A.E."/>
            <person name="Svatek A.F."/>
            <person name="Svetz L.A."/>
            <person name="Tamerisa K.S."/>
            <person name="Taylor T.R."/>
            <person name="Teague B."/>
            <person name="Thomas N."/>
            <person name="Thorn R.D."/>
            <person name="Trejos Z.Y."/>
            <person name="Trevino B.K."/>
            <person name="Ukegbu O.N."/>
            <person name="Urban J.B."/>
            <person name="Vasquez L.I."/>
            <person name="Vera V.A."/>
            <person name="Villasana D.M."/>
            <person name="Wang L."/>
            <person name="Ward-Moore S."/>
            <person name="Warren J.T."/>
            <person name="Wei X."/>
            <person name="White F."/>
            <person name="Williamson A.L."/>
            <person name="Wleczyk R."/>
            <person name="Wooden H.S."/>
            <person name="Wooden S.H."/>
            <person name="Yen J."/>
            <person name="Yoon L."/>
            <person name="Yoon V."/>
            <person name="Zorrilla S.E."/>
            <person name="Nelson D."/>
            <person name="Kucherlapati R."/>
            <person name="Weinstock G."/>
            <person name="Gibbs R.A."/>
        </authorList>
    </citation>
    <scope>NUCLEOTIDE SEQUENCE [LARGE SCALE GENOMIC DNA]</scope>
</reference>
<reference key="6">
    <citation type="journal article" date="2004" name="Genome Res.">
        <title>The status, quality, and expansion of the NIH full-length cDNA project: the Mammalian Gene Collection (MGC).</title>
        <authorList>
            <consortium name="The MGC Project Team"/>
        </authorList>
    </citation>
    <scope>NUCLEOTIDE SEQUENCE [LARGE SCALE MRNA] (ISOFORM 1)</scope>
    <scope>VARIANT 132-GLN--ALA-141 DEL</scope>
    <source>
        <tissue>Brain</tissue>
    </source>
</reference>
<reference key="7">
    <citation type="journal article" date="1994" name="J. Biol. Chem.">
        <title>The P-selectin glycoprotein ligand from human neutrophils displays sialylated, fucosylated, O-linked poly-N-acetyllactosamine.</title>
        <authorList>
            <person name="Moore K.L."/>
            <person name="Eaton S.F."/>
            <person name="Lyons D.E."/>
            <person name="Lichenstein H.S."/>
            <person name="Cummings R.D."/>
            <person name="McEver R.P."/>
        </authorList>
    </citation>
    <scope>PROTEIN SEQUENCE OF 350-355 AND 390-396</scope>
    <scope>INTERACTION WITH SELP AND SELE</scope>
    <scope>STRUCTURE OF CARBOHYDRATE</scope>
    <scope>SUBUNIT</scope>
    <scope>SIALIC ACID CONTENT</scope>
    <source>
        <tissue>Neutrophil</tissue>
    </source>
</reference>
<reference key="8">
    <citation type="journal article" date="1995" name="Cell">
        <title>A sulfated peptide segment at the amino terminus of PSGL-1 is critical for P-selectin binding.</title>
        <authorList>
            <person name="Sako D."/>
            <person name="Comess K.M."/>
            <person name="Barone K.M."/>
            <person name="Camphausen R.T."/>
            <person name="Cumming D.A."/>
            <person name="Shaw G.D."/>
        </authorList>
    </citation>
    <scope>SULFATION</scope>
    <scope>INTERACTION WITH SELP</scope>
    <scope>MUTAGENESIS OF 46-TYR--ASP-52</scope>
</reference>
<reference key="9">
    <citation type="journal article" date="1995" name="Cell">
        <title>PSGL-1 recognition of P-selectin is controlled by a tyrosine sulfation consensus at the PSGL-1 amino terminus.</title>
        <authorList>
            <person name="Pouyani T."/>
            <person name="Seed B."/>
        </authorList>
    </citation>
    <scope>SULFATION</scope>
    <scope>INTERACTION WITH SELP</scope>
    <scope>MUTAGENESIS OF TYR-46; TYR-48; TYR-51 AND THR-57</scope>
</reference>
<reference key="10">
    <citation type="journal article" date="1995" name="J. Biol. Chem.">
        <title>Tyrosine sulfation of P-selectin glycoprotein ligand-1 is required for high affinity binding to P-selectin.</title>
        <authorList>
            <person name="Wilkins P.P."/>
            <person name="Moore K.L."/>
            <person name="McEver R.P."/>
            <person name="Cummings R.D."/>
        </authorList>
    </citation>
    <scope>SULFATION</scope>
    <scope>INTERACTION WITH SELP</scope>
</reference>
<reference key="11">
    <citation type="journal article" date="1996" name="J. Biol. Chem.">
        <title>Structures of the O-glycans on P-selectin glycoprotein ligand-1 from HL-60 cells.</title>
        <authorList>
            <person name="Wilkins P.P."/>
            <person name="McEver R.P."/>
            <person name="Cummings R.D."/>
        </authorList>
    </citation>
    <scope>STRUCTURE OF O-LINKED CARBOHYDRATES</scope>
</reference>
<reference key="12">
    <citation type="journal article" date="2000" name="J. Biol. Chem.">
        <title>Noncovalent association of P-selectin glycoprotein ligand-1 and minimal determinants for binding to P-selectin.</title>
        <authorList>
            <person name="Epperson T.K."/>
            <person name="Patel K.D."/>
            <person name="McEver R.P."/>
            <person name="Cummings R.D."/>
        </authorList>
    </citation>
    <scope>INTERACTION WITH SELP</scope>
    <scope>DISULFIDE BOND AT CYS-320</scope>
    <scope>MUTAGENESIS OF CYS-320</scope>
</reference>
<reference key="13">
    <citation type="journal article" date="2001" name="Biophys. J.">
        <title>Tyrosine sulfation enhances but is not required for PSGL-1 rolling adhesion on P-selectin.</title>
        <authorList>
            <person name="Rodgers S.D."/>
            <person name="Camphausen R.T."/>
            <person name="Hammer D.A."/>
        </authorList>
    </citation>
    <scope>INTERACTION WITH SELE AND SELP</scope>
    <scope>SULFATION</scope>
    <scope>FUNCTION</scope>
</reference>
<reference key="14">
    <citation type="journal article" date="2002" name="Immunity">
        <title>ITAM-based interaction of ERM proteins with Syk mediates signaling by the leukocyte adhesion receptor PSGL-1.</title>
        <authorList>
            <person name="Urzainqui A."/>
            <person name="Serrador J.M."/>
            <person name="Viedma F."/>
            <person name="Yanez-Mo M."/>
            <person name="Rodriguez A."/>
            <person name="Corbi A.L."/>
            <person name="Alonso-Lebrero J.L."/>
            <person name="Luque A."/>
            <person name="Deckert M."/>
            <person name="Vazquez J."/>
            <person name="Sanchez-Madrid F."/>
        </authorList>
    </citation>
    <scope>INTERACTION WITH MSN AND SYK</scope>
</reference>
<reference key="15">
    <citation type="journal article" date="2003" name="J. Biol. Chem.">
        <title>Molecular basis of leukocyte rolling on PSGL-1. Predominant role of core-2 O-glycans and of tyrosine sulfate residue 51.</title>
        <authorList>
            <person name="Bernimoulin M.P."/>
            <person name="Zeng X.-L."/>
            <person name="Abbal C."/>
            <person name="Giraud S."/>
            <person name="Martinez M."/>
            <person name="Michielin O."/>
            <person name="Schapira M."/>
            <person name="Spertini O."/>
        </authorList>
    </citation>
    <scope>INTERACTION WITH SELL</scope>
    <scope>FUNCTION</scope>
    <scope>MUTAGENESIS OF THR-44; TYR-48; TYR-51 AND THR-57</scope>
</reference>
<reference key="16">
    <citation type="journal article" date="2003" name="J. Biol. Chem.">
        <title>Model glycosulfopeptides from P-selectin glycoprotein ligand-1 require tyrosine sulfation and a core 2-branched O-glycan to bind to L-selectin.</title>
        <authorList>
            <person name="Leppaenen A."/>
            <person name="Yago T."/>
            <person name="Otto V.I."/>
            <person name="McEver R.P."/>
            <person name="Cummings R.D."/>
        </authorList>
    </citation>
    <scope>INTERACTION WITH SELL</scope>
    <scope>SULFATION</scope>
    <scope>GLYCOSYLATION</scope>
</reference>
<reference key="17">
    <citation type="journal article" date="2007" name="Blood">
        <title>Staphylococcal superantigen-like 5 binds PSGL-1 and inhibits P-selectin-mediated neutrophil rolling.</title>
        <authorList>
            <person name="Bestebroer J."/>
            <person name="Poppelier M.J."/>
            <person name="Ulfman L.H."/>
            <person name="Lenting P.J."/>
            <person name="Denis C.V."/>
            <person name="van Kessel K.P."/>
            <person name="van Strijp J.A."/>
            <person name="de Haas C.J."/>
        </authorList>
    </citation>
    <scope>INTERACTION WITH STAPHYLOCOCCUS AUREUS PROTEIN SSL5 (MICROBIAL INFECTION)</scope>
</reference>
<reference key="18">
    <citation type="journal article" date="2007" name="Mol. Microbiol.">
        <title>The crystal structure of staphylococcal superantigen-like protein 11 in complex with sialyl Lewis X reveals the mechanism for cell binding and immune inhibition.</title>
        <authorList>
            <person name="Chung M.C."/>
            <person name="Wines B.D."/>
            <person name="Baker H."/>
            <person name="Langley R.J."/>
            <person name="Baker E.N."/>
            <person name="Fraser J.D."/>
        </authorList>
    </citation>
    <scope>INTERACTION WITH STAPHYLOCOCCUS AUREUS PROTEIN SSL11 (MICROBIAL INFECTION)</scope>
</reference>
<reference key="19">
    <citation type="journal article" date="2008" name="Eur. J. Immunol.">
        <title>SLIC-1/sorting nexin 20: a novel sorting nexin that directs subcellular distribution of PSGL-1.</title>
        <authorList>
            <person name="Schaff U.Y."/>
            <person name="Shih H.H."/>
            <person name="Lorenz M."/>
            <person name="Sako D."/>
            <person name="Kriz R."/>
            <person name="Milarski K."/>
            <person name="Bates B."/>
            <person name="Tchernychev B."/>
            <person name="Shaw G.D."/>
            <person name="Simon S.I."/>
        </authorList>
    </citation>
    <scope>INTERACTION WITH SNX20</scope>
</reference>
<reference key="20">
    <citation type="journal article" date="2008" name="Proc. Natl. Acad. Sci. U.S.A.">
        <title>A quantitative atlas of mitotic phosphorylation.</title>
        <authorList>
            <person name="Dephoure N."/>
            <person name="Zhou C."/>
            <person name="Villen J."/>
            <person name="Beausoleil S.A."/>
            <person name="Bakalarski C.E."/>
            <person name="Elledge S.J."/>
            <person name="Gygi S.P."/>
        </authorList>
    </citation>
    <scope>IDENTIFICATION BY MASS SPECTROMETRY [LARGE SCALE ANALYSIS]</scope>
    <source>
        <tissue>Cervix carcinoma</tissue>
    </source>
</reference>
<reference key="21">
    <citation type="journal article" date="2009" name="Nat. Med.">
        <title>Human P-selectin glycoprotein ligand-1 is a functional receptor for enterovirus 71.</title>
        <authorList>
            <person name="Nishimura Y."/>
            <person name="Shimojima M."/>
            <person name="Tano Y."/>
            <person name="Miyamura T."/>
            <person name="Wakita T."/>
            <person name="Shimizu H."/>
        </authorList>
    </citation>
    <scope>FUNCTION (MICROBIAL INFECTION)</scope>
    <scope>INTERACTION WITH EBTEROVIRUS 71 CAPSID PROTEINS (MICROBIAL INFECTION)</scope>
</reference>
<reference key="22">
    <citation type="journal article" date="2013" name="J. Proteome Res.">
        <title>Toward a comprehensive characterization of a human cancer cell phosphoproteome.</title>
        <authorList>
            <person name="Zhou H."/>
            <person name="Di Palma S."/>
            <person name="Preisinger C."/>
            <person name="Peng M."/>
            <person name="Polat A.N."/>
            <person name="Heck A.J."/>
            <person name="Mohammed S."/>
        </authorList>
    </citation>
    <scope>PHOSPHORYLATION [LARGE SCALE ANALYSIS] AT THR-406 AND SER-409</scope>
    <scope>IDENTIFICATION BY MASS SPECTROMETRY [LARGE SCALE ANALYSIS]</scope>
    <source>
        <tissue>Erythroleukemia</tissue>
    </source>
</reference>
<reference key="23">
    <citation type="journal article" date="2014" name="Immunity">
        <title>TIM-1 glycoprotein binds the adhesion receptor P-selectin and mediates T cell trafficking during inflammation and autoimmunity.</title>
        <authorList>
            <person name="Angiari S."/>
            <person name="Donnarumma T."/>
            <person name="Rossi B."/>
            <person name="Dusi S."/>
            <person name="Pietronigro E."/>
            <person name="Zenaro E."/>
            <person name="Della Bianca V."/>
            <person name="Toffali L."/>
            <person name="Piacentino G."/>
            <person name="Budui S."/>
            <person name="Rennert P."/>
            <person name="Xiao S."/>
            <person name="Laudanna C."/>
            <person name="Casasnovas J.M."/>
            <person name="Kuchroo V.K."/>
            <person name="Constantin G."/>
        </authorList>
    </citation>
    <scope>INTERACTION WITH HAVCR1</scope>
</reference>
<reference key="24">
    <citation type="journal article" date="2000" name="Cell">
        <title>Insights into the molecular basis of leukocyte tethering and rolling revealed by structures of P- and E-selectin bound to SLe(X) and PSGL-1.</title>
        <authorList>
            <person name="Somers W.S."/>
            <person name="Tang J."/>
            <person name="Shaw G.D."/>
            <person name="Camphausen R.T."/>
        </authorList>
    </citation>
    <scope>X-RAY CRYSTALLOGRAPHY (1.9 ANGSTROMS) OF 42-68 IN COMPLEX WITH SELE AND SELP LECTIN/EGF DOMAINS</scope>
    <scope>SULFATION AT TYR-46; TYR-48 AND TYR-51</scope>
    <scope>GLYCOSYLATION AT THR-57</scope>
    <scope>PYROGLUTAMATE FORMATION AT GLN-42</scope>
</reference>
<reference key="25">
    <citation type="journal article" date="2001" name="Cell">
        <authorList>
            <person name="Somers W.S."/>
            <person name="Tang J."/>
            <person name="Shaw G.D."/>
            <person name="Camphausen R.T."/>
        </authorList>
    </citation>
    <scope>ERRATUM OF PUBMED:11081633</scope>
</reference>
<reference key="26">
    <citation type="journal article" date="2014" name="J. Hum. Genet.">
        <title>A girl with West syndrome and autistic features harboring a de novo TBL1XR1 mutation.</title>
        <authorList>
            <person name="Saitsu H."/>
            <person name="Tohyama J."/>
            <person name="Walsh T."/>
            <person name="Kato M."/>
            <person name="Kobayashi Y."/>
            <person name="Lee M."/>
            <person name="Tsurusaki Y."/>
            <person name="Miyake N."/>
            <person name="Goto Y."/>
            <person name="Nishino I."/>
            <person name="Ohtake A."/>
            <person name="King M.C."/>
            <person name="Matsumoto N."/>
        </authorList>
    </citation>
    <scope>VARIANT MET-249</scope>
</reference>
<sequence length="412" mass="43201">MPLQLLLLLILLGPGNSLQLWDTWADEAEKALGPLLARDRRQATEYEYLDYDFLPETEPPEMLRNSTDTTPLTGPGTPESTTVEPAARRSTGLDAGGAVTELTTELANMGNLSTDSAAMEIQTTQPAATEAQTTQPVPTEAQTTPLAATEAQTTRLTATEAQTTPLAATEAQTTPPAATEAQTTQPTGLEAQTTAPAAMEAQTTAPAAMEAQTTPPAAMEAQTTQTTAMEAQTTAPEATEAQTTQPTATEAQTTPLAAMEALSTEPSATEALSMEPTTKRGLFIPFSVSSVTHKGIPMAASNLSVNYPVGAPDHISVKQCLLAILILALVATIFFVCTVVLAVRLSRKGHMYPVRNYSPTEMVCISSLLPDGGEGPSATANGGLSKAKSPGLTPEPREDREGDDLTLHSFLP</sequence>